<sequence length="394" mass="44824">MEQTWRWYGPNDPVSLADVRQAGATGVVTALHHIPNGEVWSVEEILKRKAIVEDAGLVWSVVESVPIHEDIKTHTGNYEQWIANYQQTLRNLAQCGIRTVCYNFMPVLDWTRTDLEYVLPDGSKALRFDQIEFAAFEMHILKRPGAEADYTEEEIAQAAERFATMSDEDKARLTRNIIAGLPGAEEGYTLDQFRKHLELYKDIDKAKLRENFAVFLKAIIPVAEEVGVRMAVHPDDPPRPILGLPRIVSTIEDMQWMVDTVNSMANGFTMCTGSYGVRADNDLVDMIKQFGPRIYFTHLRSTMREDNPKTFHEAAHLNGDVDMYEVVKAIVEEEHRRKAEGKEDLIPMRPDHGHQMLDDLKKKTNPGYSAIGRLKGLAEVRGVELAIQRAFFSR</sequence>
<feature type="chain" id="PRO_0000170671" description="Mannonate dehydratase">
    <location>
        <begin position="1"/>
        <end position="394"/>
    </location>
</feature>
<dbReference type="EC" id="4.2.1.8"/>
<dbReference type="EMBL" id="AE014075">
    <property type="protein sequence ID" value="AAN83824.1"/>
    <property type="molecule type" value="Genomic_DNA"/>
</dbReference>
<dbReference type="RefSeq" id="WP_000438582.1">
    <property type="nucleotide sequence ID" value="NZ_CP051263.1"/>
</dbReference>
<dbReference type="SMR" id="P0A4R9"/>
<dbReference type="STRING" id="199310.c5402"/>
<dbReference type="GeneID" id="93777517"/>
<dbReference type="KEGG" id="ecc:c5402"/>
<dbReference type="eggNOG" id="COG1312">
    <property type="taxonomic scope" value="Bacteria"/>
</dbReference>
<dbReference type="HOGENOM" id="CLU_058621_2_0_6"/>
<dbReference type="BioCyc" id="ECOL199310:C5402-MONOMER"/>
<dbReference type="UniPathway" id="UPA00246"/>
<dbReference type="Proteomes" id="UP000001410">
    <property type="component" value="Chromosome"/>
</dbReference>
<dbReference type="GO" id="GO:0008198">
    <property type="term" value="F:ferrous iron binding"/>
    <property type="evidence" value="ECO:0007669"/>
    <property type="project" value="TreeGrafter"/>
</dbReference>
<dbReference type="GO" id="GO:0030145">
    <property type="term" value="F:manganese ion binding"/>
    <property type="evidence" value="ECO:0007669"/>
    <property type="project" value="TreeGrafter"/>
</dbReference>
<dbReference type="GO" id="GO:0008927">
    <property type="term" value="F:mannonate dehydratase activity"/>
    <property type="evidence" value="ECO:0007669"/>
    <property type="project" value="UniProtKB-UniRule"/>
</dbReference>
<dbReference type="GO" id="GO:0042840">
    <property type="term" value="P:D-glucuronate catabolic process"/>
    <property type="evidence" value="ECO:0007669"/>
    <property type="project" value="TreeGrafter"/>
</dbReference>
<dbReference type="FunFam" id="3.20.20.150:FF:000004">
    <property type="entry name" value="Mannonate dehydratase"/>
    <property type="match status" value="1"/>
</dbReference>
<dbReference type="FunFam" id="3.20.20.150:FF:000005">
    <property type="entry name" value="Mannonate dehydratase"/>
    <property type="match status" value="1"/>
</dbReference>
<dbReference type="Gene3D" id="3.20.20.150">
    <property type="entry name" value="Divalent-metal-dependent TIM barrel enzymes"/>
    <property type="match status" value="2"/>
</dbReference>
<dbReference type="HAMAP" id="MF_00106">
    <property type="entry name" value="UxuA"/>
    <property type="match status" value="1"/>
</dbReference>
<dbReference type="InterPro" id="IPR004628">
    <property type="entry name" value="Man_deHydtase"/>
</dbReference>
<dbReference type="InterPro" id="IPR036237">
    <property type="entry name" value="Xyl_isomerase-like_sf"/>
</dbReference>
<dbReference type="NCBIfam" id="NF003027">
    <property type="entry name" value="PRK03906.1"/>
    <property type="match status" value="1"/>
</dbReference>
<dbReference type="NCBIfam" id="TIGR00695">
    <property type="entry name" value="uxuA"/>
    <property type="match status" value="1"/>
</dbReference>
<dbReference type="PANTHER" id="PTHR30387">
    <property type="entry name" value="MANNONATE DEHYDRATASE"/>
    <property type="match status" value="1"/>
</dbReference>
<dbReference type="PANTHER" id="PTHR30387:SF2">
    <property type="entry name" value="MANNONATE DEHYDRATASE"/>
    <property type="match status" value="1"/>
</dbReference>
<dbReference type="Pfam" id="PF03786">
    <property type="entry name" value="UxuA"/>
    <property type="match status" value="1"/>
</dbReference>
<dbReference type="PIRSF" id="PIRSF016049">
    <property type="entry name" value="Man_dehyd"/>
    <property type="match status" value="1"/>
</dbReference>
<dbReference type="SUPFAM" id="SSF51658">
    <property type="entry name" value="Xylose isomerase-like"/>
    <property type="match status" value="1"/>
</dbReference>
<comment type="function">
    <text evidence="1">Catalyzes the dehydration of D-mannonate.</text>
</comment>
<comment type="catalytic activity">
    <reaction>
        <text>D-mannonate = 2-dehydro-3-deoxy-D-gluconate + H2O</text>
        <dbReference type="Rhea" id="RHEA:20097"/>
        <dbReference type="ChEBI" id="CHEBI:15377"/>
        <dbReference type="ChEBI" id="CHEBI:17767"/>
        <dbReference type="ChEBI" id="CHEBI:57990"/>
        <dbReference type="EC" id="4.2.1.8"/>
    </reaction>
</comment>
<comment type="cofactor">
    <cofactor evidence="1">
        <name>Fe(2+)</name>
        <dbReference type="ChEBI" id="CHEBI:29033"/>
    </cofactor>
    <cofactor evidence="1">
        <name>Mn(2+)</name>
        <dbReference type="ChEBI" id="CHEBI:29035"/>
    </cofactor>
</comment>
<comment type="pathway">
    <text>Carbohydrate metabolism; pentose and glucuronate interconversion.</text>
</comment>
<comment type="similarity">
    <text evidence="2">Belongs to the mannonate dehydratase family.</text>
</comment>
<evidence type="ECO:0000250" key="1"/>
<evidence type="ECO:0000305" key="2"/>
<gene>
    <name type="primary">uxuA</name>
    <name type="ordered locus">c5402</name>
</gene>
<reference key="1">
    <citation type="journal article" date="2002" name="Proc. Natl. Acad. Sci. U.S.A.">
        <title>Extensive mosaic structure revealed by the complete genome sequence of uropathogenic Escherichia coli.</title>
        <authorList>
            <person name="Welch R.A."/>
            <person name="Burland V."/>
            <person name="Plunkett G. III"/>
            <person name="Redford P."/>
            <person name="Roesch P."/>
            <person name="Rasko D."/>
            <person name="Buckles E.L."/>
            <person name="Liou S.-R."/>
            <person name="Boutin A."/>
            <person name="Hackett J."/>
            <person name="Stroud D."/>
            <person name="Mayhew G.F."/>
            <person name="Rose D.J."/>
            <person name="Zhou S."/>
            <person name="Schwartz D.C."/>
            <person name="Perna N.T."/>
            <person name="Mobley H.L.T."/>
            <person name="Donnenberg M.S."/>
            <person name="Blattner F.R."/>
        </authorList>
    </citation>
    <scope>NUCLEOTIDE SEQUENCE [LARGE SCALE GENOMIC DNA]</scope>
    <source>
        <strain>CFT073 / ATCC 700928 / UPEC</strain>
    </source>
</reference>
<proteinExistence type="inferred from homology"/>
<name>UXUA_ECOL6</name>
<organism>
    <name type="scientific">Escherichia coli O6:H1 (strain CFT073 / ATCC 700928 / UPEC)</name>
    <dbReference type="NCBI Taxonomy" id="199310"/>
    <lineage>
        <taxon>Bacteria</taxon>
        <taxon>Pseudomonadati</taxon>
        <taxon>Pseudomonadota</taxon>
        <taxon>Gammaproteobacteria</taxon>
        <taxon>Enterobacterales</taxon>
        <taxon>Enterobacteriaceae</taxon>
        <taxon>Escherichia</taxon>
    </lineage>
</organism>
<protein>
    <recommendedName>
        <fullName>Mannonate dehydratase</fullName>
        <ecNumber>4.2.1.8</ecNumber>
    </recommendedName>
    <alternativeName>
        <fullName>D-mannonate hydro-lyase</fullName>
    </alternativeName>
</protein>
<keyword id="KW-0408">Iron</keyword>
<keyword id="KW-0456">Lyase</keyword>
<keyword id="KW-0464">Manganese</keyword>
<keyword id="KW-1185">Reference proteome</keyword>
<accession>P0A4R9</accession>
<accession>P59592</accession>